<organism>
    <name type="scientific">Burkholderia pseudomallei (strain 1710b)</name>
    <dbReference type="NCBI Taxonomy" id="320372"/>
    <lineage>
        <taxon>Bacteria</taxon>
        <taxon>Pseudomonadati</taxon>
        <taxon>Pseudomonadota</taxon>
        <taxon>Betaproteobacteria</taxon>
        <taxon>Burkholderiales</taxon>
        <taxon>Burkholderiaceae</taxon>
        <taxon>Burkholderia</taxon>
        <taxon>pseudomallei group</taxon>
    </lineage>
</organism>
<comment type="function">
    <text evidence="1">May play a role in DNA repair. It seems to be involved in an RecBC-independent recombinational process of DNA repair. It may act with RecF and RecO.</text>
</comment>
<comment type="similarity">
    <text evidence="1">Belongs to the RecR family.</text>
</comment>
<comment type="sequence caution" evidence="2">
    <conflict type="erroneous initiation">
        <sequence resource="EMBL-CDS" id="ABA50726"/>
    </conflict>
</comment>
<proteinExistence type="inferred from homology"/>
<accession>Q3JRN7</accession>
<protein>
    <recommendedName>
        <fullName evidence="1">Recombination protein RecR</fullName>
    </recommendedName>
</protein>
<feature type="chain" id="PRO_1000001518" description="Recombination protein RecR">
    <location>
        <begin position="1"/>
        <end position="200"/>
    </location>
</feature>
<feature type="domain" description="Toprim" evidence="1">
    <location>
        <begin position="82"/>
        <end position="177"/>
    </location>
</feature>
<feature type="zinc finger region" description="C4-type" evidence="1">
    <location>
        <begin position="59"/>
        <end position="74"/>
    </location>
</feature>
<keyword id="KW-0227">DNA damage</keyword>
<keyword id="KW-0233">DNA recombination</keyword>
<keyword id="KW-0234">DNA repair</keyword>
<keyword id="KW-0479">Metal-binding</keyword>
<keyword id="KW-0862">Zinc</keyword>
<keyword id="KW-0863">Zinc-finger</keyword>
<evidence type="ECO:0000255" key="1">
    <source>
        <dbReference type="HAMAP-Rule" id="MF_00017"/>
    </source>
</evidence>
<evidence type="ECO:0000305" key="2"/>
<sequence length="200" mass="22056">MSIKPPSALSELVEALRALPGVGPKSAQRIAYHLMQHDREGAERLGRSLLFATEHLRHCEKCNTFTEAQICEVCSDPERDPALLCVVETPADQIMLEQTMTYRGLYFVLMGRLSPLDGIGPKEIHFDRLVRRASDGIVKEVVLATNFTNEGEATAHYLGQTLKARGLAVTRLARGVPVGGELEYVDAGTIARAMLDRRTL</sequence>
<name>RECR_BURP1</name>
<reference key="1">
    <citation type="journal article" date="2010" name="Genome Biol. Evol.">
        <title>Continuing evolution of Burkholderia mallei through genome reduction and large-scale rearrangements.</title>
        <authorList>
            <person name="Losada L."/>
            <person name="Ronning C.M."/>
            <person name="DeShazer D."/>
            <person name="Woods D."/>
            <person name="Fedorova N."/>
            <person name="Kim H.S."/>
            <person name="Shabalina S.A."/>
            <person name="Pearson T.R."/>
            <person name="Brinkac L."/>
            <person name="Tan P."/>
            <person name="Nandi T."/>
            <person name="Crabtree J."/>
            <person name="Badger J."/>
            <person name="Beckstrom-Sternberg S."/>
            <person name="Saqib M."/>
            <person name="Schutzer S.E."/>
            <person name="Keim P."/>
            <person name="Nierman W.C."/>
        </authorList>
    </citation>
    <scope>NUCLEOTIDE SEQUENCE [LARGE SCALE GENOMIC DNA]</scope>
    <source>
        <strain>1710b</strain>
    </source>
</reference>
<dbReference type="EMBL" id="CP000124">
    <property type="protein sequence ID" value="ABA50726.1"/>
    <property type="status" value="ALT_INIT"/>
    <property type="molecule type" value="Genomic_DNA"/>
</dbReference>
<dbReference type="RefSeq" id="WP_004193537.1">
    <property type="nucleotide sequence ID" value="NC_007434.1"/>
</dbReference>
<dbReference type="SMR" id="Q3JRN7"/>
<dbReference type="EnsemblBacteria" id="ABA50726">
    <property type="protein sequence ID" value="ABA50726"/>
    <property type="gene ID" value="BURPS1710b_2371"/>
</dbReference>
<dbReference type="GeneID" id="93060489"/>
<dbReference type="KEGG" id="bpm:BURPS1710b_2371"/>
<dbReference type="HOGENOM" id="CLU_060739_1_2_4"/>
<dbReference type="Proteomes" id="UP000002700">
    <property type="component" value="Chromosome I"/>
</dbReference>
<dbReference type="GO" id="GO:0003677">
    <property type="term" value="F:DNA binding"/>
    <property type="evidence" value="ECO:0007669"/>
    <property type="project" value="UniProtKB-UniRule"/>
</dbReference>
<dbReference type="GO" id="GO:0008270">
    <property type="term" value="F:zinc ion binding"/>
    <property type="evidence" value="ECO:0007669"/>
    <property type="project" value="UniProtKB-KW"/>
</dbReference>
<dbReference type="GO" id="GO:0006310">
    <property type="term" value="P:DNA recombination"/>
    <property type="evidence" value="ECO:0007669"/>
    <property type="project" value="UniProtKB-UniRule"/>
</dbReference>
<dbReference type="GO" id="GO:0006281">
    <property type="term" value="P:DNA repair"/>
    <property type="evidence" value="ECO:0007669"/>
    <property type="project" value="UniProtKB-UniRule"/>
</dbReference>
<dbReference type="CDD" id="cd01025">
    <property type="entry name" value="TOPRIM_recR"/>
    <property type="match status" value="1"/>
</dbReference>
<dbReference type="Gene3D" id="3.40.1360.10">
    <property type="match status" value="1"/>
</dbReference>
<dbReference type="Gene3D" id="6.10.250.240">
    <property type="match status" value="1"/>
</dbReference>
<dbReference type="Gene3D" id="1.10.8.420">
    <property type="entry name" value="RecR Domain 1"/>
    <property type="match status" value="1"/>
</dbReference>
<dbReference type="HAMAP" id="MF_00017">
    <property type="entry name" value="RecR"/>
    <property type="match status" value="1"/>
</dbReference>
<dbReference type="InterPro" id="IPR000093">
    <property type="entry name" value="DNA_Rcmb_RecR"/>
</dbReference>
<dbReference type="InterPro" id="IPR023627">
    <property type="entry name" value="Rcmb_RecR"/>
</dbReference>
<dbReference type="InterPro" id="IPR015967">
    <property type="entry name" value="Rcmb_RecR_Znf"/>
</dbReference>
<dbReference type="InterPro" id="IPR006171">
    <property type="entry name" value="TOPRIM_dom"/>
</dbReference>
<dbReference type="InterPro" id="IPR034137">
    <property type="entry name" value="TOPRIM_RecR"/>
</dbReference>
<dbReference type="NCBIfam" id="TIGR00615">
    <property type="entry name" value="recR"/>
    <property type="match status" value="1"/>
</dbReference>
<dbReference type="PANTHER" id="PTHR30446">
    <property type="entry name" value="RECOMBINATION PROTEIN RECR"/>
    <property type="match status" value="1"/>
</dbReference>
<dbReference type="PANTHER" id="PTHR30446:SF0">
    <property type="entry name" value="RECOMBINATION PROTEIN RECR"/>
    <property type="match status" value="1"/>
</dbReference>
<dbReference type="Pfam" id="PF21175">
    <property type="entry name" value="RecR_C"/>
    <property type="match status" value="1"/>
</dbReference>
<dbReference type="Pfam" id="PF21176">
    <property type="entry name" value="RecR_HhH"/>
    <property type="match status" value="1"/>
</dbReference>
<dbReference type="Pfam" id="PF02132">
    <property type="entry name" value="RecR_ZnF"/>
    <property type="match status" value="1"/>
</dbReference>
<dbReference type="Pfam" id="PF13662">
    <property type="entry name" value="Toprim_4"/>
    <property type="match status" value="1"/>
</dbReference>
<dbReference type="SMART" id="SM00493">
    <property type="entry name" value="TOPRIM"/>
    <property type="match status" value="1"/>
</dbReference>
<dbReference type="SUPFAM" id="SSF111304">
    <property type="entry name" value="Recombination protein RecR"/>
    <property type="match status" value="1"/>
</dbReference>
<dbReference type="PROSITE" id="PS01300">
    <property type="entry name" value="RECR"/>
    <property type="match status" value="1"/>
</dbReference>
<dbReference type="PROSITE" id="PS50880">
    <property type="entry name" value="TOPRIM"/>
    <property type="match status" value="1"/>
</dbReference>
<gene>
    <name evidence="1" type="primary">recR</name>
    <name type="ordered locus">BURPS1710b_2371</name>
</gene>